<sequence>MAVVTMRQLLESGVHFGHQTRRWNPKMKRFIMTERNGIYIIDLQQSLAYIDRSYAFVKETVAKGGTIMFVGTKKQAQEAIAEQATRVGMPYVNQRWLGGMLTNFSTVHQRINRLKELDEIDFDDVAGSSRTKKELLQMRRERDKLNKSLGGIREMTRTPSAVWIVDTNKEHLAVEEARKLRIPIIGILDSNCDPDLVDFPIPGNDDAIRAVGLLTRVVADAVAEGLIARSGVKAGEGAEAVGAEEPLAEWERELLGGEAEQAAVDATGGAATEETPAAESTGAASEAAAVSEAAEPATEQPAADAEA</sequence>
<proteinExistence type="inferred from homology"/>
<gene>
    <name evidence="1" type="primary">rpsB</name>
    <name type="ordered locus">Noca_3243</name>
</gene>
<name>RS2_NOCSJ</name>
<organism>
    <name type="scientific">Nocardioides sp. (strain ATCC BAA-499 / JS614)</name>
    <dbReference type="NCBI Taxonomy" id="196162"/>
    <lineage>
        <taxon>Bacteria</taxon>
        <taxon>Bacillati</taxon>
        <taxon>Actinomycetota</taxon>
        <taxon>Actinomycetes</taxon>
        <taxon>Propionibacteriales</taxon>
        <taxon>Nocardioidaceae</taxon>
        <taxon>Nocardioides</taxon>
    </lineage>
</organism>
<comment type="similarity">
    <text evidence="1">Belongs to the universal ribosomal protein uS2 family.</text>
</comment>
<feature type="chain" id="PRO_1000004011" description="Small ribosomal subunit protein uS2">
    <location>
        <begin position="1"/>
        <end position="307"/>
    </location>
</feature>
<feature type="region of interest" description="Disordered" evidence="2">
    <location>
        <begin position="256"/>
        <end position="307"/>
    </location>
</feature>
<feature type="compositionally biased region" description="Low complexity" evidence="2">
    <location>
        <begin position="259"/>
        <end position="307"/>
    </location>
</feature>
<protein>
    <recommendedName>
        <fullName evidence="1">Small ribosomal subunit protein uS2</fullName>
    </recommendedName>
    <alternativeName>
        <fullName evidence="3">30S ribosomal protein S2</fullName>
    </alternativeName>
</protein>
<evidence type="ECO:0000255" key="1">
    <source>
        <dbReference type="HAMAP-Rule" id="MF_00291"/>
    </source>
</evidence>
<evidence type="ECO:0000256" key="2">
    <source>
        <dbReference type="SAM" id="MobiDB-lite"/>
    </source>
</evidence>
<evidence type="ECO:0000305" key="3"/>
<reference key="1">
    <citation type="submission" date="2006-12" db="EMBL/GenBank/DDBJ databases">
        <title>Complete sequence of chromosome 1 of Nocardioides sp. JS614.</title>
        <authorList>
            <person name="Copeland A."/>
            <person name="Lucas S."/>
            <person name="Lapidus A."/>
            <person name="Barry K."/>
            <person name="Detter J.C."/>
            <person name="Glavina del Rio T."/>
            <person name="Hammon N."/>
            <person name="Israni S."/>
            <person name="Dalin E."/>
            <person name="Tice H."/>
            <person name="Pitluck S."/>
            <person name="Thompson L.S."/>
            <person name="Brettin T."/>
            <person name="Bruce D."/>
            <person name="Han C."/>
            <person name="Tapia R."/>
            <person name="Schmutz J."/>
            <person name="Larimer F."/>
            <person name="Land M."/>
            <person name="Hauser L."/>
            <person name="Kyrpides N."/>
            <person name="Kim E."/>
            <person name="Mattes T."/>
            <person name="Gossett J."/>
            <person name="Richardson P."/>
        </authorList>
    </citation>
    <scope>NUCLEOTIDE SEQUENCE [LARGE SCALE GENOMIC DNA]</scope>
    <source>
        <strain>ATCC BAA-499 / JS614</strain>
    </source>
</reference>
<accession>A1SLR0</accession>
<keyword id="KW-1185">Reference proteome</keyword>
<keyword id="KW-0687">Ribonucleoprotein</keyword>
<keyword id="KW-0689">Ribosomal protein</keyword>
<dbReference type="EMBL" id="CP000509">
    <property type="protein sequence ID" value="ABL82745.1"/>
    <property type="molecule type" value="Genomic_DNA"/>
</dbReference>
<dbReference type="RefSeq" id="WP_011756679.1">
    <property type="nucleotide sequence ID" value="NC_008699.1"/>
</dbReference>
<dbReference type="SMR" id="A1SLR0"/>
<dbReference type="STRING" id="196162.Noca_3243"/>
<dbReference type="KEGG" id="nca:Noca_3243"/>
<dbReference type="eggNOG" id="COG0052">
    <property type="taxonomic scope" value="Bacteria"/>
</dbReference>
<dbReference type="HOGENOM" id="CLU_040318_2_3_11"/>
<dbReference type="OrthoDB" id="9808036at2"/>
<dbReference type="Proteomes" id="UP000000640">
    <property type="component" value="Chromosome"/>
</dbReference>
<dbReference type="GO" id="GO:0022627">
    <property type="term" value="C:cytosolic small ribosomal subunit"/>
    <property type="evidence" value="ECO:0007669"/>
    <property type="project" value="TreeGrafter"/>
</dbReference>
<dbReference type="GO" id="GO:0003735">
    <property type="term" value="F:structural constituent of ribosome"/>
    <property type="evidence" value="ECO:0007669"/>
    <property type="project" value="InterPro"/>
</dbReference>
<dbReference type="GO" id="GO:0006412">
    <property type="term" value="P:translation"/>
    <property type="evidence" value="ECO:0007669"/>
    <property type="project" value="UniProtKB-UniRule"/>
</dbReference>
<dbReference type="CDD" id="cd01425">
    <property type="entry name" value="RPS2"/>
    <property type="match status" value="1"/>
</dbReference>
<dbReference type="FunFam" id="1.10.287.610:FF:000001">
    <property type="entry name" value="30S ribosomal protein S2"/>
    <property type="match status" value="1"/>
</dbReference>
<dbReference type="Gene3D" id="3.40.50.10490">
    <property type="entry name" value="Glucose-6-phosphate isomerase like protein, domain 1"/>
    <property type="match status" value="1"/>
</dbReference>
<dbReference type="Gene3D" id="1.10.287.610">
    <property type="entry name" value="Helix hairpin bin"/>
    <property type="match status" value="1"/>
</dbReference>
<dbReference type="HAMAP" id="MF_00291_B">
    <property type="entry name" value="Ribosomal_uS2_B"/>
    <property type="match status" value="1"/>
</dbReference>
<dbReference type="InterPro" id="IPR001865">
    <property type="entry name" value="Ribosomal_uS2"/>
</dbReference>
<dbReference type="InterPro" id="IPR005706">
    <property type="entry name" value="Ribosomal_uS2_bac/mit/plastid"/>
</dbReference>
<dbReference type="InterPro" id="IPR018130">
    <property type="entry name" value="Ribosomal_uS2_CS"/>
</dbReference>
<dbReference type="InterPro" id="IPR023591">
    <property type="entry name" value="Ribosomal_uS2_flav_dom_sf"/>
</dbReference>
<dbReference type="NCBIfam" id="TIGR01011">
    <property type="entry name" value="rpsB_bact"/>
    <property type="match status" value="1"/>
</dbReference>
<dbReference type="PANTHER" id="PTHR12534">
    <property type="entry name" value="30S RIBOSOMAL PROTEIN S2 PROKARYOTIC AND ORGANELLAR"/>
    <property type="match status" value="1"/>
</dbReference>
<dbReference type="PANTHER" id="PTHR12534:SF0">
    <property type="entry name" value="SMALL RIBOSOMAL SUBUNIT PROTEIN US2M"/>
    <property type="match status" value="1"/>
</dbReference>
<dbReference type="Pfam" id="PF00318">
    <property type="entry name" value="Ribosomal_S2"/>
    <property type="match status" value="1"/>
</dbReference>
<dbReference type="PRINTS" id="PR00395">
    <property type="entry name" value="RIBOSOMALS2"/>
</dbReference>
<dbReference type="SUPFAM" id="SSF52313">
    <property type="entry name" value="Ribosomal protein S2"/>
    <property type="match status" value="1"/>
</dbReference>
<dbReference type="PROSITE" id="PS00962">
    <property type="entry name" value="RIBOSOMAL_S2_1"/>
    <property type="match status" value="1"/>
</dbReference>